<proteinExistence type="evidence at protein level"/>
<gene>
    <name evidence="6" type="primary">vanY</name>
</gene>
<sequence>MKKLFFLLLLLFLIYLGYDYVNEALFSQEKVEFQNYDQNPKEHLENSGTSENTQEKTITEEQVYQGNLLLINSKYPVRQESVKSDIVNLSKHDELINGYGLLDSNIYMSKEIAQKFSEMVNDAVKGGVSHFIINSGYRDFDEQSVLYQEMGAEYALPAGYSEHNSGLSLDVGSSLTKMERAPEGKWIEENAWKYGFILRYPEDKTELTGIQYEPWHIRYVGLPHSAIMKEKNFVLEEYMDYLKEEKTISVSVNGEKYEIFYYPVTKNTTIHVPTNLRYEISGNNIDGVIVTVFPGSTHTNSRR</sequence>
<evidence type="ECO:0000250" key="1">
    <source>
        <dbReference type="UniProtKB" id="Q47746"/>
    </source>
</evidence>
<evidence type="ECO:0000255" key="2"/>
<evidence type="ECO:0000256" key="3">
    <source>
        <dbReference type="SAM" id="MobiDB-lite"/>
    </source>
</evidence>
<evidence type="ECO:0000269" key="4">
    <source>
    </source>
</evidence>
<evidence type="ECO:0000269" key="5">
    <source>
    </source>
</evidence>
<evidence type="ECO:0000303" key="6">
    <source>
    </source>
</evidence>
<evidence type="ECO:0000303" key="7">
    <source>
    </source>
</evidence>
<evidence type="ECO:0000303" key="8">
    <source>
    </source>
</evidence>
<evidence type="ECO:0000305" key="9"/>
<name>VANY_ENTFC</name>
<accession>P37711</accession>
<protein>
    <recommendedName>
        <fullName evidence="9">D-alanyl-D-alanine carboxypeptidase</fullName>
        <shortName evidence="6">D,D-carboxypeptidase</shortName>
        <shortName evidence="9">D-Ala-D-Ala carboxypeptidase</shortName>
        <shortName evidence="7">DD-carboxypeptidase</shortName>
        <ecNumber evidence="9">3.4.17.-</ecNumber>
    </recommendedName>
</protein>
<dbReference type="EC" id="3.4.17.-" evidence="9"/>
<dbReference type="EMBL" id="M97297">
    <property type="protein sequence ID" value="AAA65958.1"/>
    <property type="molecule type" value="Genomic_DNA"/>
</dbReference>
<dbReference type="EMBL" id="M90647">
    <property type="protein sequence ID" value="AAA98147.1"/>
    <property type="molecule type" value="Genomic_DNA"/>
</dbReference>
<dbReference type="PIR" id="JC1427">
    <property type="entry name" value="JC1427"/>
</dbReference>
<dbReference type="RefSeq" id="WP_001812592.1">
    <property type="nucleotide sequence ID" value="NZ_WSZC01000082.1"/>
</dbReference>
<dbReference type="RefSeq" id="YP_001019033.1">
    <property type="nucleotide sequence ID" value="NC_008821.1"/>
</dbReference>
<dbReference type="RefSeq" id="YP_001974794.1">
    <property type="nucleotide sequence ID" value="NC_010980.1"/>
</dbReference>
<dbReference type="RefSeq" id="YP_002128401.1">
    <property type="nucleotide sequence ID" value="NC_011140.1"/>
</dbReference>
<dbReference type="RefSeq" id="YP_976075.1">
    <property type="nucleotide sequence ID" value="NC_008768.1"/>
</dbReference>
<dbReference type="SMR" id="P37711"/>
<dbReference type="CARD" id="ARO:3002955">
    <property type="molecule name" value="vanY_in_vanA_cl"/>
    <property type="mechanism identifier" value="ARO:0001001"/>
    <property type="mechanism name" value="antibiotic target alteration"/>
</dbReference>
<dbReference type="MEROPS" id="M15.010"/>
<dbReference type="GO" id="GO:0005886">
    <property type="term" value="C:plasma membrane"/>
    <property type="evidence" value="ECO:0007669"/>
    <property type="project" value="UniProtKB-SubCell"/>
</dbReference>
<dbReference type="GO" id="GO:0004180">
    <property type="term" value="F:carboxypeptidase activity"/>
    <property type="evidence" value="ECO:0007669"/>
    <property type="project" value="UniProtKB-KW"/>
</dbReference>
<dbReference type="GO" id="GO:0046872">
    <property type="term" value="F:metal ion binding"/>
    <property type="evidence" value="ECO:0007669"/>
    <property type="project" value="UniProtKB-KW"/>
</dbReference>
<dbReference type="GO" id="GO:0071555">
    <property type="term" value="P:cell wall organization"/>
    <property type="evidence" value="ECO:0007669"/>
    <property type="project" value="UniProtKB-KW"/>
</dbReference>
<dbReference type="GO" id="GO:0009252">
    <property type="term" value="P:peptidoglycan biosynthetic process"/>
    <property type="evidence" value="ECO:0007669"/>
    <property type="project" value="UniProtKB-KW"/>
</dbReference>
<dbReference type="GO" id="GO:0006508">
    <property type="term" value="P:proteolysis"/>
    <property type="evidence" value="ECO:0007669"/>
    <property type="project" value="UniProtKB-KW"/>
</dbReference>
<dbReference type="GO" id="GO:0008360">
    <property type="term" value="P:regulation of cell shape"/>
    <property type="evidence" value="ECO:0007669"/>
    <property type="project" value="UniProtKB-KW"/>
</dbReference>
<dbReference type="CDD" id="cd14852">
    <property type="entry name" value="LD-carboxypeptidase"/>
    <property type="match status" value="1"/>
</dbReference>
<dbReference type="Gene3D" id="3.30.1380.10">
    <property type="match status" value="1"/>
</dbReference>
<dbReference type="Gene3D" id="3.30.200.180">
    <property type="match status" value="1"/>
</dbReference>
<dbReference type="InterPro" id="IPR052179">
    <property type="entry name" value="Bact_PeptidoProc_Enz"/>
</dbReference>
<dbReference type="InterPro" id="IPR009045">
    <property type="entry name" value="Hedgehog_sig/DD-Pept_Zn-bd_sf"/>
</dbReference>
<dbReference type="InterPro" id="IPR003709">
    <property type="entry name" value="Pept_M15B"/>
</dbReference>
<dbReference type="NCBIfam" id="NF000472">
    <property type="entry name" value="vanY_AFMPt"/>
    <property type="match status" value="1"/>
</dbReference>
<dbReference type="PANTHER" id="PTHR34385">
    <property type="entry name" value="D-ALANYL-D-ALANINE CARBOXYPEPTIDASE"/>
    <property type="match status" value="1"/>
</dbReference>
<dbReference type="PANTHER" id="PTHR34385:SF1">
    <property type="entry name" value="PEPTIDOGLYCAN L-ALANYL-D-GLUTAMATE ENDOPEPTIDASE CWLK"/>
    <property type="match status" value="1"/>
</dbReference>
<dbReference type="Pfam" id="PF02557">
    <property type="entry name" value="VanY"/>
    <property type="match status" value="1"/>
</dbReference>
<dbReference type="SUPFAM" id="SSF55166">
    <property type="entry name" value="Hedgehog/DD-peptidase"/>
    <property type="match status" value="1"/>
</dbReference>
<geneLocation type="plasmid">
    <name>pIP816</name>
</geneLocation>
<comment type="function">
    <text evidence="4 5 9">Cleaves the C-terminal D-alanine residue of UDP-muramyl-pentapeptide (UDP-MurNAc-L-Ala-D-Glu-mDAP-D-Ala-D-Ala) or diacetyl-L-Lys-D-Ala-D-Ala (PubMed:1510448, PubMed:9257766). However the physiological substrate likely contains L-Lys instead of mDAP at the third position of the pentapeptide (Probable). Also releases the C-terminal D-lactate from UDP-MurNAc-L-Ala-D-Glu-mDAP-D-Ala-D-lactate, a depsipeptide produced by the vancomycin resistance protein VanA. Therefore, VanY should contribute in vivo to the hydrolysis of both the D-alanyl-D-alanine- and the depsipeptide-containing peptidoglycan precursors (PubMed:1510448). Is not necessary for vancomycin resistance of E.faecium BM4147 and perhaps not W14-9 (PubMed:1398115, PubMed:9257766). Does not display transpeptidase or beta-lactamase activities (PubMed:1510448).</text>
</comment>
<comment type="cofactor">
    <cofactor evidence="1">
        <name>Zn(2+)</name>
        <dbReference type="ChEBI" id="CHEBI:29105"/>
    </cofactor>
</comment>
<comment type="activity regulation">
    <text evidence="5">The DD-carboxypeptidase activity is not inhibited by beta-lactam antibiotics.</text>
</comment>
<comment type="subcellular location">
    <subcellularLocation>
        <location evidence="5">Cell membrane</location>
        <topology evidence="2">Single-pass membrane protein</topology>
    </subcellularLocation>
</comment>
<comment type="induction">
    <text evidence="4">By vancomycin. Part of the van gene cluster of pIP816, the plasmid that confers high-level resistance to vancomycin in E.faecium BM4147.</text>
</comment>
<comment type="similarity">
    <text evidence="9">Belongs to the peptidase M15B family.</text>
</comment>
<feature type="chain" id="PRO_0000195472" description="D-alanyl-D-alanine carboxypeptidase">
    <location>
        <begin position="1"/>
        <end position="303"/>
    </location>
</feature>
<feature type="transmembrane region" description="Helical" evidence="2">
    <location>
        <begin position="7"/>
        <end position="23"/>
    </location>
</feature>
<feature type="region of interest" description="Disordered" evidence="3">
    <location>
        <begin position="37"/>
        <end position="56"/>
    </location>
</feature>
<feature type="active site" description="Proton donor/acceptor" evidence="1">
    <location>
        <position position="213"/>
    </location>
</feature>
<feature type="binding site" evidence="1">
    <location>
        <begin position="154"/>
        <end position="156"/>
    </location>
    <ligand>
        <name>substrate</name>
    </ligand>
</feature>
<feature type="binding site" evidence="1">
    <location>
        <position position="161"/>
    </location>
    <ligand>
        <name>substrate</name>
    </ligand>
</feature>
<feature type="binding site" evidence="1">
    <location>
        <position position="163"/>
    </location>
    <ligand>
        <name>Zn(2+)</name>
        <dbReference type="ChEBI" id="CHEBI:29105"/>
    </ligand>
</feature>
<feature type="binding site" evidence="1">
    <location>
        <position position="170"/>
    </location>
    <ligand>
        <name>Zn(2+)</name>
        <dbReference type="ChEBI" id="CHEBI:29105"/>
    </ligand>
</feature>
<feature type="binding site" evidence="1">
    <location>
        <position position="216"/>
    </location>
    <ligand>
        <name>Zn(2+)</name>
        <dbReference type="ChEBI" id="CHEBI:29105"/>
    </ligand>
</feature>
<organism>
    <name type="scientific">Enterococcus faecium</name>
    <name type="common">Streptococcus faecium</name>
    <dbReference type="NCBI Taxonomy" id="1352"/>
    <lineage>
        <taxon>Bacteria</taxon>
        <taxon>Bacillati</taxon>
        <taxon>Bacillota</taxon>
        <taxon>Bacilli</taxon>
        <taxon>Lactobacillales</taxon>
        <taxon>Enterococcaceae</taxon>
        <taxon>Enterococcus</taxon>
    </lineage>
</organism>
<reference key="1">
    <citation type="journal article" date="1992" name="Gene">
        <title>Sequence of the vanY gene required for production of a vancomycin-inducible D,D-carboxypeptidase in Enterococcus faecium BM4147.</title>
        <authorList>
            <person name="Arthur M."/>
            <person name="Molinas C."/>
            <person name="Courvalin P."/>
        </authorList>
    </citation>
    <scope>NUCLEOTIDE SEQUENCE [GENOMIC DNA]</scope>
    <scope>FUNCTION</scope>
    <scope>INDUCTION</scope>
    <source>
        <strain>BM4147</strain>
    </source>
</reference>
<reference key="2">
    <citation type="journal article" date="1993" name="J. Bacteriol.">
        <title>Characterization of Tn1546, a Tn3-related transposon conferring glycopeptide resistance by synthesis of depsipeptide peptidoglycan precursors in Enterococcus faecium BM4147.</title>
        <authorList>
            <person name="Arthur M."/>
            <person name="Molinas C."/>
            <person name="Depardieu F."/>
            <person name="Courvalin P."/>
        </authorList>
    </citation>
    <scope>NUCLEOTIDE SEQUENCE [GENOMIC DNA]</scope>
    <source>
        <strain>BM4147</strain>
        <transposon>Tn1546</transposon>
    </source>
</reference>
<reference key="3">
    <citation type="journal article" date="1992" name="Antimicrob. Agents Chemother.">
        <title>Characterization of vanY, a DD-carboxypeptidase from vancomycin-resistant Enterococcus faecium BM4147.</title>
        <authorList>
            <person name="Wright G.D."/>
            <person name="Molinas C."/>
            <person name="Arthur M."/>
            <person name="Courvalin P."/>
            <person name="Walsh C.T."/>
        </authorList>
    </citation>
    <scope>FUNCTION</scope>
    <scope>CATALYTIC ACTIVITY</scope>
    <scope>ACTIVITY REGULATION</scope>
    <scope>SUBCELLULAR LOCATION</scope>
    <source>
        <strain>BM4147</strain>
    </source>
</reference>
<reference evidence="9" key="4">
    <citation type="journal article" date="1997" name="Antimicrob. Agents Chemother.">
        <title>Identification and characterization of IS1476, an insertion sequence-like element that disrupts VanY function in a vancomycin-resistant Enterococcus faecium strain.</title>
        <authorList>
            <person name="MacKinnon M.G."/>
            <person name="Drebot M.A."/>
            <person name="Tyrrell G.J."/>
        </authorList>
    </citation>
    <scope>FUNCTION</scope>
    <source>
        <strain evidence="8">W14-9</strain>
    </source>
</reference>
<keyword id="KW-0121">Carboxypeptidase</keyword>
<keyword id="KW-1003">Cell membrane</keyword>
<keyword id="KW-0133">Cell shape</keyword>
<keyword id="KW-0961">Cell wall biogenesis/degradation</keyword>
<keyword id="KW-0378">Hydrolase</keyword>
<keyword id="KW-0472">Membrane</keyword>
<keyword id="KW-0479">Metal-binding</keyword>
<keyword id="KW-0573">Peptidoglycan synthesis</keyword>
<keyword id="KW-0614">Plasmid</keyword>
<keyword id="KW-0645">Protease</keyword>
<keyword id="KW-0812">Transmembrane</keyword>
<keyword id="KW-1133">Transmembrane helix</keyword>
<keyword id="KW-0862">Zinc</keyword>